<evidence type="ECO:0000255" key="1">
    <source>
        <dbReference type="HAMAP-Rule" id="MF_01368"/>
    </source>
</evidence>
<evidence type="ECO:0000305" key="2"/>
<dbReference type="EMBL" id="CP001176">
    <property type="protein sequence ID" value="ACK62882.1"/>
    <property type="molecule type" value="Genomic_DNA"/>
</dbReference>
<dbReference type="RefSeq" id="WP_000331490.1">
    <property type="nucleotide sequence ID" value="NZ_VEHB01000017.1"/>
</dbReference>
<dbReference type="SMR" id="B7HJI5"/>
<dbReference type="GeneID" id="93010915"/>
<dbReference type="KEGG" id="bcb:BCB4264_A0159"/>
<dbReference type="HOGENOM" id="CLU_074407_2_2_9"/>
<dbReference type="Proteomes" id="UP000007096">
    <property type="component" value="Chromosome"/>
</dbReference>
<dbReference type="GO" id="GO:0022625">
    <property type="term" value="C:cytosolic large ribosomal subunit"/>
    <property type="evidence" value="ECO:0007669"/>
    <property type="project" value="TreeGrafter"/>
</dbReference>
<dbReference type="GO" id="GO:0003735">
    <property type="term" value="F:structural constituent of ribosome"/>
    <property type="evidence" value="ECO:0007669"/>
    <property type="project" value="InterPro"/>
</dbReference>
<dbReference type="GO" id="GO:0006412">
    <property type="term" value="P:translation"/>
    <property type="evidence" value="ECO:0007669"/>
    <property type="project" value="UniProtKB-UniRule"/>
</dbReference>
<dbReference type="FunFam" id="3.90.1030.10:FF:000002">
    <property type="entry name" value="50S ribosomal protein L17"/>
    <property type="match status" value="1"/>
</dbReference>
<dbReference type="Gene3D" id="3.90.1030.10">
    <property type="entry name" value="Ribosomal protein L17"/>
    <property type="match status" value="1"/>
</dbReference>
<dbReference type="HAMAP" id="MF_01368">
    <property type="entry name" value="Ribosomal_bL17"/>
    <property type="match status" value="1"/>
</dbReference>
<dbReference type="InterPro" id="IPR000456">
    <property type="entry name" value="Ribosomal_bL17"/>
</dbReference>
<dbReference type="InterPro" id="IPR047859">
    <property type="entry name" value="Ribosomal_bL17_CS"/>
</dbReference>
<dbReference type="InterPro" id="IPR036373">
    <property type="entry name" value="Ribosomal_bL17_sf"/>
</dbReference>
<dbReference type="NCBIfam" id="TIGR00059">
    <property type="entry name" value="L17"/>
    <property type="match status" value="1"/>
</dbReference>
<dbReference type="PANTHER" id="PTHR14413:SF16">
    <property type="entry name" value="LARGE RIBOSOMAL SUBUNIT PROTEIN BL17M"/>
    <property type="match status" value="1"/>
</dbReference>
<dbReference type="PANTHER" id="PTHR14413">
    <property type="entry name" value="RIBOSOMAL PROTEIN L17"/>
    <property type="match status" value="1"/>
</dbReference>
<dbReference type="Pfam" id="PF01196">
    <property type="entry name" value="Ribosomal_L17"/>
    <property type="match status" value="1"/>
</dbReference>
<dbReference type="SUPFAM" id="SSF64263">
    <property type="entry name" value="Prokaryotic ribosomal protein L17"/>
    <property type="match status" value="1"/>
</dbReference>
<dbReference type="PROSITE" id="PS01167">
    <property type="entry name" value="RIBOSOMAL_L17"/>
    <property type="match status" value="1"/>
</dbReference>
<sequence length="120" mass="13450">MAYRKLGRTSAQRKAMLRDLATDLIINERIQTTETRAKELRSVVEKMITLGKRGDLHARRQAAAFIRNEVANAETGQDALQKLFADVAPRYAERQGGYTRIAKIGPRRGDAAPMVIIELV</sequence>
<organism>
    <name type="scientific">Bacillus cereus (strain B4264)</name>
    <dbReference type="NCBI Taxonomy" id="405532"/>
    <lineage>
        <taxon>Bacteria</taxon>
        <taxon>Bacillati</taxon>
        <taxon>Bacillota</taxon>
        <taxon>Bacilli</taxon>
        <taxon>Bacillales</taxon>
        <taxon>Bacillaceae</taxon>
        <taxon>Bacillus</taxon>
        <taxon>Bacillus cereus group</taxon>
    </lineage>
</organism>
<keyword id="KW-0687">Ribonucleoprotein</keyword>
<keyword id="KW-0689">Ribosomal protein</keyword>
<feature type="chain" id="PRO_1000144376" description="Large ribosomal subunit protein bL17">
    <location>
        <begin position="1"/>
        <end position="120"/>
    </location>
</feature>
<comment type="subunit">
    <text evidence="1">Part of the 50S ribosomal subunit. Contacts protein L32.</text>
</comment>
<comment type="similarity">
    <text evidence="1">Belongs to the bacterial ribosomal protein bL17 family.</text>
</comment>
<proteinExistence type="inferred from homology"/>
<name>RL17_BACC4</name>
<accession>B7HJI5</accession>
<gene>
    <name evidence="1" type="primary">rplQ</name>
    <name type="ordered locus">BCB4264_A0159</name>
</gene>
<reference key="1">
    <citation type="submission" date="2008-10" db="EMBL/GenBank/DDBJ databases">
        <title>Genome sequence of Bacillus cereus B4264.</title>
        <authorList>
            <person name="Dodson R.J."/>
            <person name="Durkin A.S."/>
            <person name="Rosovitz M.J."/>
            <person name="Rasko D.A."/>
            <person name="Hoffmaster A."/>
            <person name="Ravel J."/>
            <person name="Sutton G."/>
        </authorList>
    </citation>
    <scope>NUCLEOTIDE SEQUENCE [LARGE SCALE GENOMIC DNA]</scope>
    <source>
        <strain>B4264</strain>
    </source>
</reference>
<protein>
    <recommendedName>
        <fullName evidence="1">Large ribosomal subunit protein bL17</fullName>
    </recommendedName>
    <alternativeName>
        <fullName evidence="2">50S ribosomal protein L17</fullName>
    </alternativeName>
</protein>